<comment type="function">
    <text evidence="1">Splits dipeptides with a prolyl residue in the C-terminal position.</text>
</comment>
<comment type="catalytic activity">
    <reaction evidence="1">
        <text>Xaa-L-Pro dipeptide + H2O = an L-alpha-amino acid + L-proline</text>
        <dbReference type="Rhea" id="RHEA:76407"/>
        <dbReference type="ChEBI" id="CHEBI:15377"/>
        <dbReference type="ChEBI" id="CHEBI:59869"/>
        <dbReference type="ChEBI" id="CHEBI:60039"/>
        <dbReference type="ChEBI" id="CHEBI:195196"/>
        <dbReference type="EC" id="3.4.13.9"/>
    </reaction>
</comment>
<comment type="cofactor">
    <cofactor evidence="1">
        <name>Mn(2+)</name>
        <dbReference type="ChEBI" id="CHEBI:29035"/>
    </cofactor>
    <text evidence="1">Binds 2 manganese ions per subunit.</text>
</comment>
<comment type="similarity">
    <text evidence="1">Belongs to the peptidase M24B family. Bacterial-type prolidase subfamily.</text>
</comment>
<gene>
    <name evidence="1" type="primary">pepQ</name>
    <name type="ordered locus">plu4401</name>
</gene>
<sequence length="444" mass="50842">MEKLASLYHEHISTLQQRTCEALARNQFDALLIHSGELQHIFLDDRDYPFKVNACFKAWVPVTKVPNCWLWVDGINKPKLWFYSPVDYWHSVEPLPTSYWTKEVEMIHLANAGDINSALSTYVKQNVAYIGCSPQRAKEIGFSERNINPKSVLDYLHFHRSYKTDYELVCMREAQKTAIVGHLAAYEAFQAGMSEFDINISYLMATGHRDTDVPYNNIIAMNENAAVLHYTALQHNAPSDIRSFLIDAGAEYNGYAADITRTYSAKSNNEFASLIKDMDAEQKALISTIKVGTRYTEYHIQMHHRIAKLLKKYGIVKDVSEEVMVEEGLTTPFFPHGIGHPLGLQVHDVAGFMQDDTGTHLAAPDMYPYLRCTRILEPRMVLTIEPGLYFIESLLAPWRESEFSKHFDWNKIGTLKLFGGIRIEDNIVIHENKVENMTRDLQLP</sequence>
<dbReference type="EC" id="3.4.13.9" evidence="1"/>
<dbReference type="EMBL" id="BX571873">
    <property type="protein sequence ID" value="CAE16773.1"/>
    <property type="molecule type" value="Genomic_DNA"/>
</dbReference>
<dbReference type="RefSeq" id="WP_011148491.1">
    <property type="nucleotide sequence ID" value="NC_005126.1"/>
</dbReference>
<dbReference type="SMR" id="Q7MZ93"/>
<dbReference type="STRING" id="243265.plu4401"/>
<dbReference type="MEROPS" id="M24.003"/>
<dbReference type="GeneID" id="48850616"/>
<dbReference type="KEGG" id="plu:plu4401"/>
<dbReference type="eggNOG" id="COG0006">
    <property type="taxonomic scope" value="Bacteria"/>
</dbReference>
<dbReference type="HOGENOM" id="CLU_050675_0_0_6"/>
<dbReference type="OrthoDB" id="9806388at2"/>
<dbReference type="Proteomes" id="UP000002514">
    <property type="component" value="Chromosome"/>
</dbReference>
<dbReference type="GO" id="GO:0005829">
    <property type="term" value="C:cytosol"/>
    <property type="evidence" value="ECO:0007669"/>
    <property type="project" value="TreeGrafter"/>
</dbReference>
<dbReference type="GO" id="GO:0004177">
    <property type="term" value="F:aminopeptidase activity"/>
    <property type="evidence" value="ECO:0007669"/>
    <property type="project" value="TreeGrafter"/>
</dbReference>
<dbReference type="GO" id="GO:0046872">
    <property type="term" value="F:metal ion binding"/>
    <property type="evidence" value="ECO:0007669"/>
    <property type="project" value="UniProtKB-KW"/>
</dbReference>
<dbReference type="GO" id="GO:0008235">
    <property type="term" value="F:metalloexopeptidase activity"/>
    <property type="evidence" value="ECO:0007669"/>
    <property type="project" value="UniProtKB-UniRule"/>
</dbReference>
<dbReference type="GO" id="GO:0016795">
    <property type="term" value="F:phosphoric triester hydrolase activity"/>
    <property type="evidence" value="ECO:0007669"/>
    <property type="project" value="InterPro"/>
</dbReference>
<dbReference type="GO" id="GO:0102009">
    <property type="term" value="F:proline dipeptidase activity"/>
    <property type="evidence" value="ECO:0007669"/>
    <property type="project" value="UniProtKB-EC"/>
</dbReference>
<dbReference type="GO" id="GO:0006508">
    <property type="term" value="P:proteolysis"/>
    <property type="evidence" value="ECO:0007669"/>
    <property type="project" value="UniProtKB-KW"/>
</dbReference>
<dbReference type="CDD" id="cd01087">
    <property type="entry name" value="Prolidase"/>
    <property type="match status" value="1"/>
</dbReference>
<dbReference type="Gene3D" id="3.90.230.10">
    <property type="entry name" value="Creatinase/methionine aminopeptidase superfamily"/>
    <property type="match status" value="1"/>
</dbReference>
<dbReference type="Gene3D" id="3.40.350.10">
    <property type="entry name" value="Creatinase/prolidase N-terminal domain"/>
    <property type="match status" value="1"/>
</dbReference>
<dbReference type="HAMAP" id="MF_01279">
    <property type="entry name" value="X_Pro_dipeptid"/>
    <property type="match status" value="1"/>
</dbReference>
<dbReference type="InterPro" id="IPR029149">
    <property type="entry name" value="Creatin/AminoP/Spt16_N"/>
</dbReference>
<dbReference type="InterPro" id="IPR036005">
    <property type="entry name" value="Creatinase/aminopeptidase-like"/>
</dbReference>
<dbReference type="InterPro" id="IPR048819">
    <property type="entry name" value="PepQ_N"/>
</dbReference>
<dbReference type="InterPro" id="IPR000994">
    <property type="entry name" value="Pept_M24"/>
</dbReference>
<dbReference type="InterPro" id="IPR001131">
    <property type="entry name" value="Peptidase_M24B_aminopep-P_CS"/>
</dbReference>
<dbReference type="InterPro" id="IPR052433">
    <property type="entry name" value="X-Pro_dipept-like"/>
</dbReference>
<dbReference type="InterPro" id="IPR022846">
    <property type="entry name" value="X_Pro_dipept"/>
</dbReference>
<dbReference type="NCBIfam" id="NF010133">
    <property type="entry name" value="PRK13607.1"/>
    <property type="match status" value="1"/>
</dbReference>
<dbReference type="PANTHER" id="PTHR43226">
    <property type="entry name" value="XAA-PRO AMINOPEPTIDASE 3"/>
    <property type="match status" value="1"/>
</dbReference>
<dbReference type="PANTHER" id="PTHR43226:SF8">
    <property type="entry name" value="XAA-PRO DIPEPTIDASE"/>
    <property type="match status" value="1"/>
</dbReference>
<dbReference type="Pfam" id="PF21216">
    <property type="entry name" value="PepQ_N"/>
    <property type="match status" value="1"/>
</dbReference>
<dbReference type="Pfam" id="PF00557">
    <property type="entry name" value="Peptidase_M24"/>
    <property type="match status" value="1"/>
</dbReference>
<dbReference type="SUPFAM" id="SSF55920">
    <property type="entry name" value="Creatinase/aminopeptidase"/>
    <property type="match status" value="1"/>
</dbReference>
<dbReference type="PROSITE" id="PS00491">
    <property type="entry name" value="PROLINE_PEPTIDASE"/>
    <property type="match status" value="1"/>
</dbReference>
<reference key="1">
    <citation type="journal article" date="2003" name="Nat. Biotechnol.">
        <title>The genome sequence of the entomopathogenic bacterium Photorhabdus luminescens.</title>
        <authorList>
            <person name="Duchaud E."/>
            <person name="Rusniok C."/>
            <person name="Frangeul L."/>
            <person name="Buchrieser C."/>
            <person name="Givaudan A."/>
            <person name="Taourit S."/>
            <person name="Bocs S."/>
            <person name="Boursaux-Eude C."/>
            <person name="Chandler M."/>
            <person name="Charles J.-F."/>
            <person name="Dassa E."/>
            <person name="Derose R."/>
            <person name="Derzelle S."/>
            <person name="Freyssinet G."/>
            <person name="Gaudriault S."/>
            <person name="Medigue C."/>
            <person name="Lanois A."/>
            <person name="Powell K."/>
            <person name="Siguier P."/>
            <person name="Vincent R."/>
            <person name="Wingate V."/>
            <person name="Zouine M."/>
            <person name="Glaser P."/>
            <person name="Boemare N."/>
            <person name="Danchin A."/>
            <person name="Kunst F."/>
        </authorList>
    </citation>
    <scope>NUCLEOTIDE SEQUENCE [LARGE SCALE GENOMIC DNA]</scope>
    <source>
        <strain>DSM 15139 / CIP 105565 / TT01</strain>
    </source>
</reference>
<feature type="chain" id="PRO_0000303850" description="Xaa-Pro dipeptidase">
    <location>
        <begin position="1"/>
        <end position="444"/>
    </location>
</feature>
<feature type="binding site" evidence="1">
    <location>
        <position position="247"/>
    </location>
    <ligand>
        <name>Mn(2+)</name>
        <dbReference type="ChEBI" id="CHEBI:29035"/>
        <label>2</label>
    </ligand>
</feature>
<feature type="binding site" evidence="1">
    <location>
        <position position="258"/>
    </location>
    <ligand>
        <name>Mn(2+)</name>
        <dbReference type="ChEBI" id="CHEBI:29035"/>
        <label>1</label>
    </ligand>
</feature>
<feature type="binding site" evidence="1">
    <location>
        <position position="258"/>
    </location>
    <ligand>
        <name>Mn(2+)</name>
        <dbReference type="ChEBI" id="CHEBI:29035"/>
        <label>2</label>
    </ligand>
</feature>
<feature type="binding site" evidence="1">
    <location>
        <position position="340"/>
    </location>
    <ligand>
        <name>Mn(2+)</name>
        <dbReference type="ChEBI" id="CHEBI:29035"/>
        <label>1</label>
    </ligand>
</feature>
<feature type="binding site" evidence="1">
    <location>
        <position position="385"/>
    </location>
    <ligand>
        <name>Mn(2+)</name>
        <dbReference type="ChEBI" id="CHEBI:29035"/>
        <label>1</label>
    </ligand>
</feature>
<feature type="binding site" evidence="1">
    <location>
        <position position="424"/>
    </location>
    <ligand>
        <name>Mn(2+)</name>
        <dbReference type="ChEBI" id="CHEBI:29035"/>
        <label>1</label>
    </ligand>
</feature>
<feature type="binding site" evidence="1">
    <location>
        <position position="424"/>
    </location>
    <ligand>
        <name>Mn(2+)</name>
        <dbReference type="ChEBI" id="CHEBI:29035"/>
        <label>2</label>
    </ligand>
</feature>
<protein>
    <recommendedName>
        <fullName evidence="1">Xaa-Pro dipeptidase</fullName>
        <shortName evidence="1">X-Pro dipeptidase</shortName>
        <ecNumber evidence="1">3.4.13.9</ecNumber>
    </recommendedName>
    <alternativeName>
        <fullName evidence="1">Imidodipeptidase</fullName>
    </alternativeName>
    <alternativeName>
        <fullName evidence="1">Proline dipeptidase</fullName>
        <shortName evidence="1">Prolidase</shortName>
    </alternativeName>
</protein>
<proteinExistence type="inferred from homology"/>
<name>PEPQ_PHOLL</name>
<accession>Q7MZ93</accession>
<organism>
    <name type="scientific">Photorhabdus laumondii subsp. laumondii (strain DSM 15139 / CIP 105565 / TT01)</name>
    <name type="common">Photorhabdus luminescens subsp. laumondii</name>
    <dbReference type="NCBI Taxonomy" id="243265"/>
    <lineage>
        <taxon>Bacteria</taxon>
        <taxon>Pseudomonadati</taxon>
        <taxon>Pseudomonadota</taxon>
        <taxon>Gammaproteobacteria</taxon>
        <taxon>Enterobacterales</taxon>
        <taxon>Morganellaceae</taxon>
        <taxon>Photorhabdus</taxon>
    </lineage>
</organism>
<keyword id="KW-0224">Dipeptidase</keyword>
<keyword id="KW-0378">Hydrolase</keyword>
<keyword id="KW-0464">Manganese</keyword>
<keyword id="KW-0479">Metal-binding</keyword>
<keyword id="KW-0482">Metalloprotease</keyword>
<keyword id="KW-0645">Protease</keyword>
<keyword id="KW-1185">Reference proteome</keyword>
<evidence type="ECO:0000255" key="1">
    <source>
        <dbReference type="HAMAP-Rule" id="MF_01279"/>
    </source>
</evidence>